<comment type="function">
    <text evidence="1">Acts as a chaperone.</text>
</comment>
<comment type="induction">
    <text evidence="1">By stress conditions e.g. heat shock.</text>
</comment>
<comment type="similarity">
    <text evidence="1">Belongs to the heat shock protein 70 family.</text>
</comment>
<feature type="chain" id="PRO_0000078435" description="Chaperone protein DnaK">
    <location>
        <begin position="1"/>
        <end position="638"/>
    </location>
</feature>
<feature type="region of interest" description="Disordered" evidence="2">
    <location>
        <begin position="598"/>
        <end position="638"/>
    </location>
</feature>
<feature type="compositionally biased region" description="Low complexity" evidence="2">
    <location>
        <begin position="608"/>
        <end position="619"/>
    </location>
</feature>
<feature type="modified residue" description="Phosphothreonine; by autocatalysis" evidence="1">
    <location>
        <position position="199"/>
    </location>
</feature>
<evidence type="ECO:0000255" key="1">
    <source>
        <dbReference type="HAMAP-Rule" id="MF_00332"/>
    </source>
</evidence>
<evidence type="ECO:0000256" key="2">
    <source>
        <dbReference type="SAM" id="MobiDB-lite"/>
    </source>
</evidence>
<protein>
    <recommendedName>
        <fullName evidence="1">Chaperone protein DnaK</fullName>
    </recommendedName>
    <alternativeName>
        <fullName evidence="1">HSP70</fullName>
    </alternativeName>
    <alternativeName>
        <fullName evidence="1">Heat shock 70 kDa protein</fullName>
    </alternativeName>
    <alternativeName>
        <fullName evidence="1">Heat shock protein 70</fullName>
    </alternativeName>
</protein>
<name>DNAK_BUCBP</name>
<reference key="1">
    <citation type="journal article" date="2003" name="Proc. Natl. Acad. Sci. U.S.A.">
        <title>Reductive genome evolution in Buchnera aphidicola.</title>
        <authorList>
            <person name="van Ham R.C.H.J."/>
            <person name="Kamerbeek J."/>
            <person name="Palacios C."/>
            <person name="Rausell C."/>
            <person name="Abascal F."/>
            <person name="Bastolla U."/>
            <person name="Fernandez J.M."/>
            <person name="Jimenez L."/>
            <person name="Postigo M."/>
            <person name="Silva F.J."/>
            <person name="Tamames J."/>
            <person name="Viguera E."/>
            <person name="Latorre A."/>
            <person name="Valencia A."/>
            <person name="Moran F."/>
            <person name="Moya A."/>
        </authorList>
    </citation>
    <scope>NUCLEOTIDE SEQUENCE [LARGE SCALE GENOMIC DNA]</scope>
    <source>
        <strain>Bp</strain>
    </source>
</reference>
<sequence length="638" mass="70368">MSKIIGIDLGTTNSCIAIMDGNKARVLENSEGDRTTPSIIAYTNDNEILIGKPAKRQSITNPKNTLFAIKRLIGRKFTDNEVQRDIKIMPYKIIQSENGDAWINIKNKKLAPPQISAEILKKMKKTAEDYLGESIQEAVITVPAYFNDAQRQATKDAGRIAGLKVKRIINEPTAAALAYGLDKGKGNKTIAVYDLGGGTFDISIIEIDDVDKEKTFEVLATNGDTHLGGEDFDNRLINYLVEDFKKDQGTDLRNDSLAMQRLKESAEKAKIELSSTQQTDVNLPYITADSTGPKHLNIKVTRSKLESLVEDLITRSIEPLKIALKDAKLSISDIDDVILVGGQTRMPMVQKKVAEFFKKEPRKDVNPDEAVAVGAAVQGGVLSGEVKDVLLLDVTPLSLGIETMGGVMTTLISKNTTIPTKHSQIFSTAEDNQTAVTIHVLQGERKRSIDNKSLGQFNLDGIQPAPRGMAQIEVTFDIDSDGILHVSAKDKNTGKEQKITIKASSGLNETEIKKMILDAEQNSESDQKFEELVKVRNQGDQISHSTKKQLKDLEKTINVNDQKEINEALNKLDTALKGENKTKIEEKIQEVLKISTKLIEKNKPKQTSESSNSNSPSSSKPEENVVDAEFEEVKDQKK</sequence>
<keyword id="KW-0067">ATP-binding</keyword>
<keyword id="KW-0143">Chaperone</keyword>
<keyword id="KW-0547">Nucleotide-binding</keyword>
<keyword id="KW-0597">Phosphoprotein</keyword>
<keyword id="KW-1185">Reference proteome</keyword>
<keyword id="KW-0346">Stress response</keyword>
<proteinExistence type="inferred from homology"/>
<dbReference type="EMBL" id="AE016826">
    <property type="protein sequence ID" value="AAO26876.1"/>
    <property type="molecule type" value="Genomic_DNA"/>
</dbReference>
<dbReference type="RefSeq" id="WP_011091277.1">
    <property type="nucleotide sequence ID" value="NC_004545.1"/>
</dbReference>
<dbReference type="SMR" id="P59565"/>
<dbReference type="STRING" id="224915.bbp_142"/>
<dbReference type="KEGG" id="bab:bbp_142"/>
<dbReference type="eggNOG" id="COG0443">
    <property type="taxonomic scope" value="Bacteria"/>
</dbReference>
<dbReference type="HOGENOM" id="CLU_005965_2_1_6"/>
<dbReference type="OrthoDB" id="9766019at2"/>
<dbReference type="Proteomes" id="UP000000601">
    <property type="component" value="Chromosome"/>
</dbReference>
<dbReference type="GO" id="GO:0005524">
    <property type="term" value="F:ATP binding"/>
    <property type="evidence" value="ECO:0007669"/>
    <property type="project" value="UniProtKB-UniRule"/>
</dbReference>
<dbReference type="GO" id="GO:0140662">
    <property type="term" value="F:ATP-dependent protein folding chaperone"/>
    <property type="evidence" value="ECO:0007669"/>
    <property type="project" value="InterPro"/>
</dbReference>
<dbReference type="GO" id="GO:0051082">
    <property type="term" value="F:unfolded protein binding"/>
    <property type="evidence" value="ECO:0007669"/>
    <property type="project" value="InterPro"/>
</dbReference>
<dbReference type="CDD" id="cd10234">
    <property type="entry name" value="ASKHA_NBD_HSP70_DnaK-like"/>
    <property type="match status" value="1"/>
</dbReference>
<dbReference type="FunFam" id="2.60.34.10:FF:000014">
    <property type="entry name" value="Chaperone protein DnaK HSP70"/>
    <property type="match status" value="1"/>
</dbReference>
<dbReference type="FunFam" id="1.20.1270.10:FF:000001">
    <property type="entry name" value="Molecular chaperone DnaK"/>
    <property type="match status" value="1"/>
</dbReference>
<dbReference type="FunFam" id="3.30.420.40:FF:000004">
    <property type="entry name" value="Molecular chaperone DnaK"/>
    <property type="match status" value="1"/>
</dbReference>
<dbReference type="FunFam" id="3.90.640.10:FF:000003">
    <property type="entry name" value="Molecular chaperone DnaK"/>
    <property type="match status" value="1"/>
</dbReference>
<dbReference type="Gene3D" id="1.20.1270.10">
    <property type="match status" value="1"/>
</dbReference>
<dbReference type="Gene3D" id="3.30.420.40">
    <property type="match status" value="2"/>
</dbReference>
<dbReference type="Gene3D" id="3.90.640.10">
    <property type="entry name" value="Actin, Chain A, domain 4"/>
    <property type="match status" value="1"/>
</dbReference>
<dbReference type="Gene3D" id="2.60.34.10">
    <property type="entry name" value="Substrate Binding Domain Of DNAk, Chain A, domain 1"/>
    <property type="match status" value="1"/>
</dbReference>
<dbReference type="HAMAP" id="MF_00332">
    <property type="entry name" value="DnaK"/>
    <property type="match status" value="1"/>
</dbReference>
<dbReference type="InterPro" id="IPR043129">
    <property type="entry name" value="ATPase_NBD"/>
</dbReference>
<dbReference type="InterPro" id="IPR012725">
    <property type="entry name" value="Chaperone_DnaK"/>
</dbReference>
<dbReference type="InterPro" id="IPR018181">
    <property type="entry name" value="Heat_shock_70_CS"/>
</dbReference>
<dbReference type="InterPro" id="IPR029048">
    <property type="entry name" value="HSP70_C_sf"/>
</dbReference>
<dbReference type="InterPro" id="IPR029047">
    <property type="entry name" value="HSP70_peptide-bd_sf"/>
</dbReference>
<dbReference type="InterPro" id="IPR013126">
    <property type="entry name" value="Hsp_70_fam"/>
</dbReference>
<dbReference type="NCBIfam" id="NF001413">
    <property type="entry name" value="PRK00290.1"/>
    <property type="match status" value="1"/>
</dbReference>
<dbReference type="NCBIfam" id="NF003520">
    <property type="entry name" value="PRK05183.1"/>
    <property type="match status" value="1"/>
</dbReference>
<dbReference type="NCBIfam" id="TIGR02350">
    <property type="entry name" value="prok_dnaK"/>
    <property type="match status" value="1"/>
</dbReference>
<dbReference type="PANTHER" id="PTHR19375">
    <property type="entry name" value="HEAT SHOCK PROTEIN 70KDA"/>
    <property type="match status" value="1"/>
</dbReference>
<dbReference type="Pfam" id="PF00012">
    <property type="entry name" value="HSP70"/>
    <property type="match status" value="1"/>
</dbReference>
<dbReference type="PRINTS" id="PR00301">
    <property type="entry name" value="HEATSHOCK70"/>
</dbReference>
<dbReference type="SUPFAM" id="SSF53067">
    <property type="entry name" value="Actin-like ATPase domain"/>
    <property type="match status" value="2"/>
</dbReference>
<dbReference type="SUPFAM" id="SSF100934">
    <property type="entry name" value="Heat shock protein 70kD (HSP70), C-terminal subdomain"/>
    <property type="match status" value="1"/>
</dbReference>
<dbReference type="SUPFAM" id="SSF100920">
    <property type="entry name" value="Heat shock protein 70kD (HSP70), peptide-binding domain"/>
    <property type="match status" value="1"/>
</dbReference>
<dbReference type="PROSITE" id="PS00297">
    <property type="entry name" value="HSP70_1"/>
    <property type="match status" value="1"/>
</dbReference>
<dbReference type="PROSITE" id="PS00329">
    <property type="entry name" value="HSP70_2"/>
    <property type="match status" value="1"/>
</dbReference>
<dbReference type="PROSITE" id="PS01036">
    <property type="entry name" value="HSP70_3"/>
    <property type="match status" value="1"/>
</dbReference>
<accession>P59565</accession>
<gene>
    <name evidence="1" type="primary">dnaK</name>
    <name type="ordered locus">bbp_142</name>
</gene>
<organism>
    <name type="scientific">Buchnera aphidicola subsp. Baizongia pistaciae (strain Bp)</name>
    <dbReference type="NCBI Taxonomy" id="224915"/>
    <lineage>
        <taxon>Bacteria</taxon>
        <taxon>Pseudomonadati</taxon>
        <taxon>Pseudomonadota</taxon>
        <taxon>Gammaproteobacteria</taxon>
        <taxon>Enterobacterales</taxon>
        <taxon>Erwiniaceae</taxon>
        <taxon>Buchnera</taxon>
    </lineage>
</organism>